<keyword id="KW-0489">Methyltransferase</keyword>
<keyword id="KW-1185">Reference proteome</keyword>
<keyword id="KW-0949">S-adenosyl-L-methionine</keyword>
<keyword id="KW-0808">Transferase</keyword>
<feature type="chain" id="PRO_0000104118" description="Putative S-adenosyl-L-methionine-dependent methyltransferase Rv3399">
    <location>
        <begin position="1"/>
        <end position="348"/>
    </location>
</feature>
<feature type="binding site" evidence="1">
    <location>
        <position position="171"/>
    </location>
    <ligand>
        <name>S-adenosyl-L-methionine</name>
        <dbReference type="ChEBI" id="CHEBI:59789"/>
    </ligand>
</feature>
<feature type="binding site" evidence="1">
    <location>
        <begin position="200"/>
        <end position="201"/>
    </location>
    <ligand>
        <name>S-adenosyl-L-methionine</name>
        <dbReference type="ChEBI" id="CHEBI:59789"/>
    </ligand>
</feature>
<proteinExistence type="evidence at protein level"/>
<dbReference type="EC" id="2.1.1.-"/>
<dbReference type="EMBL" id="AL123456">
    <property type="protein sequence ID" value="CCP46221.1"/>
    <property type="molecule type" value="Genomic_DNA"/>
</dbReference>
<dbReference type="PIR" id="D70735">
    <property type="entry name" value="D70735"/>
</dbReference>
<dbReference type="RefSeq" id="NP_217916.1">
    <property type="nucleotide sequence ID" value="NC_000962.3"/>
</dbReference>
<dbReference type="RefSeq" id="WP_010886169.1">
    <property type="nucleotide sequence ID" value="NC_000962.3"/>
</dbReference>
<dbReference type="SMR" id="P9WFH1"/>
<dbReference type="STRING" id="83332.Rv3399"/>
<dbReference type="PaxDb" id="83332-Rv3399"/>
<dbReference type="GeneID" id="887938"/>
<dbReference type="KEGG" id="mtu:Rv3399"/>
<dbReference type="KEGG" id="mtv:RVBD_3399"/>
<dbReference type="PATRIC" id="fig|83332.12.peg.3796"/>
<dbReference type="TubercuList" id="Rv3399"/>
<dbReference type="eggNOG" id="COG3315">
    <property type="taxonomic scope" value="Bacteria"/>
</dbReference>
<dbReference type="InParanoid" id="P9WFH1"/>
<dbReference type="OrthoDB" id="9806164at2"/>
<dbReference type="Proteomes" id="UP000001584">
    <property type="component" value="Chromosome"/>
</dbReference>
<dbReference type="GO" id="GO:0008168">
    <property type="term" value="F:methyltransferase activity"/>
    <property type="evidence" value="ECO:0007669"/>
    <property type="project" value="UniProtKB-KW"/>
</dbReference>
<dbReference type="GO" id="GO:0032259">
    <property type="term" value="P:methylation"/>
    <property type="evidence" value="ECO:0007669"/>
    <property type="project" value="UniProtKB-KW"/>
</dbReference>
<dbReference type="FunFam" id="3.40.50.150:FF:000152">
    <property type="entry name" value="S-adenosyl-L-methionine-dependent methyltransferase"/>
    <property type="match status" value="1"/>
</dbReference>
<dbReference type="Gene3D" id="3.40.50.150">
    <property type="entry name" value="Vaccinia Virus protein VP39"/>
    <property type="match status" value="1"/>
</dbReference>
<dbReference type="InterPro" id="IPR007213">
    <property type="entry name" value="Ppm1/Ppm2/Tcmp"/>
</dbReference>
<dbReference type="InterPro" id="IPR029063">
    <property type="entry name" value="SAM-dependent_MTases_sf"/>
</dbReference>
<dbReference type="InterPro" id="IPR011610">
    <property type="entry name" value="SAM_mthyl_Trfase_ML2640-like"/>
</dbReference>
<dbReference type="NCBIfam" id="TIGR00027">
    <property type="entry name" value="mthyl_TIGR00027"/>
    <property type="match status" value="1"/>
</dbReference>
<dbReference type="PANTHER" id="PTHR43619">
    <property type="entry name" value="S-ADENOSYL-L-METHIONINE-DEPENDENT METHYLTRANSFERASE YKTD-RELATED"/>
    <property type="match status" value="1"/>
</dbReference>
<dbReference type="PANTHER" id="PTHR43619:SF2">
    <property type="entry name" value="S-ADENOSYL-L-METHIONINE-DEPENDENT METHYLTRANSFERASES SUPERFAMILY PROTEIN"/>
    <property type="match status" value="1"/>
</dbReference>
<dbReference type="Pfam" id="PF04072">
    <property type="entry name" value="LCM"/>
    <property type="match status" value="1"/>
</dbReference>
<dbReference type="SUPFAM" id="SSF53335">
    <property type="entry name" value="S-adenosyl-L-methionine-dependent methyltransferases"/>
    <property type="match status" value="1"/>
</dbReference>
<accession>P9WFH1</accession>
<accession>L0TFA0</accession>
<accession>Q50726</accession>
<name>Y3399_MYCTU</name>
<evidence type="ECO:0000250" key="1">
    <source>
        <dbReference type="UniProtKB" id="Q9CCZ4"/>
    </source>
</evidence>
<evidence type="ECO:0000305" key="2"/>
<gene>
    <name type="ordered locus">Rv3399</name>
    <name type="ORF">MTCY78.29c</name>
</gene>
<protein>
    <recommendedName>
        <fullName>Putative S-adenosyl-L-methionine-dependent methyltransferase Rv3399</fullName>
        <ecNumber>2.1.1.-</ecNumber>
    </recommendedName>
</protein>
<organism>
    <name type="scientific">Mycobacterium tuberculosis (strain ATCC 25618 / H37Rv)</name>
    <dbReference type="NCBI Taxonomy" id="83332"/>
    <lineage>
        <taxon>Bacteria</taxon>
        <taxon>Bacillati</taxon>
        <taxon>Actinomycetota</taxon>
        <taxon>Actinomycetes</taxon>
        <taxon>Mycobacteriales</taxon>
        <taxon>Mycobacteriaceae</taxon>
        <taxon>Mycobacterium</taxon>
        <taxon>Mycobacterium tuberculosis complex</taxon>
    </lineage>
</organism>
<reference key="1">
    <citation type="journal article" date="1998" name="Nature">
        <title>Deciphering the biology of Mycobacterium tuberculosis from the complete genome sequence.</title>
        <authorList>
            <person name="Cole S.T."/>
            <person name="Brosch R."/>
            <person name="Parkhill J."/>
            <person name="Garnier T."/>
            <person name="Churcher C.M."/>
            <person name="Harris D.E."/>
            <person name="Gordon S.V."/>
            <person name="Eiglmeier K."/>
            <person name="Gas S."/>
            <person name="Barry C.E. III"/>
            <person name="Tekaia F."/>
            <person name="Badcock K."/>
            <person name="Basham D."/>
            <person name="Brown D."/>
            <person name="Chillingworth T."/>
            <person name="Connor R."/>
            <person name="Davies R.M."/>
            <person name="Devlin K."/>
            <person name="Feltwell T."/>
            <person name="Gentles S."/>
            <person name="Hamlin N."/>
            <person name="Holroyd S."/>
            <person name="Hornsby T."/>
            <person name="Jagels K."/>
            <person name="Krogh A."/>
            <person name="McLean J."/>
            <person name="Moule S."/>
            <person name="Murphy L.D."/>
            <person name="Oliver S."/>
            <person name="Osborne J."/>
            <person name="Quail M.A."/>
            <person name="Rajandream M.A."/>
            <person name="Rogers J."/>
            <person name="Rutter S."/>
            <person name="Seeger K."/>
            <person name="Skelton S."/>
            <person name="Squares S."/>
            <person name="Squares R."/>
            <person name="Sulston J.E."/>
            <person name="Taylor K."/>
            <person name="Whitehead S."/>
            <person name="Barrell B.G."/>
        </authorList>
    </citation>
    <scope>NUCLEOTIDE SEQUENCE [LARGE SCALE GENOMIC DNA]</scope>
    <source>
        <strain>ATCC 25618 / H37Rv</strain>
    </source>
</reference>
<reference key="2">
    <citation type="journal article" date="2011" name="Mol. Cell. Proteomics">
        <title>Proteogenomic analysis of Mycobacterium tuberculosis by high resolution mass spectrometry.</title>
        <authorList>
            <person name="Kelkar D.S."/>
            <person name="Kumar D."/>
            <person name="Kumar P."/>
            <person name="Balakrishnan L."/>
            <person name="Muthusamy B."/>
            <person name="Yadav A.K."/>
            <person name="Shrivastava P."/>
            <person name="Marimuthu A."/>
            <person name="Anand S."/>
            <person name="Sundaram H."/>
            <person name="Kingsbury R."/>
            <person name="Harsha H.C."/>
            <person name="Nair B."/>
            <person name="Prasad T.S."/>
            <person name="Chauhan D.S."/>
            <person name="Katoch K."/>
            <person name="Katoch V.M."/>
            <person name="Kumar P."/>
            <person name="Chaerkady R."/>
            <person name="Ramachandran S."/>
            <person name="Dash D."/>
            <person name="Pandey A."/>
        </authorList>
    </citation>
    <scope>IDENTIFICATION BY MASS SPECTROMETRY [LARGE SCALE ANALYSIS]</scope>
    <source>
        <strain>ATCC 25618 / H37Rv</strain>
    </source>
</reference>
<sequence length="348" mass="38140">MARPMGKLPSNTRKCAQCAMAEALLEIAGQTINQKDLGRSGRMTRTDNDTWDLASSVGATATMIATARALASRAENPLINDPFAEPLVRAVGIDLFTRLASGELRLEDIGDHATGGRWMIDNIAIRTKFYDDFFGDATTAGIRQVVILAAGLDTRAYRLPWPPGTVVYEIDQPAVIKFKTRALANLNAEPNAERHAVAVDLRNDWPTALKNAGFDPARPTAFSAEGLLSYLPPQGQDRLLDAITALSAPDSRLATQSPLVLDLAEEDEKKMRMKSAAEAWRERGFDLDLTELIYFDQRNDVADYLAGSGWQVTTSTGKELFAAQGLPPFADDHITRFADRRYISAVLK</sequence>
<comment type="function">
    <text evidence="1">Exhibits S-adenosyl-L-methionine-dependent methyltransferase activity.</text>
</comment>
<comment type="similarity">
    <text evidence="2">Belongs to the UPF0677 family.</text>
</comment>